<feature type="signal peptide" evidence="2">
    <location>
        <begin position="1"/>
        <end position="20"/>
    </location>
</feature>
<feature type="chain" id="PRO_0000383623" description="Interference hedgehog" evidence="2">
    <location>
        <begin position="21"/>
        <end position="880"/>
    </location>
</feature>
<feature type="topological domain" description="Extracellular" evidence="2">
    <location>
        <begin position="21"/>
        <end position="703"/>
    </location>
</feature>
<feature type="transmembrane region" description="Helical" evidence="2">
    <location>
        <begin position="704"/>
        <end position="724"/>
    </location>
</feature>
<feature type="topological domain" description="Cytoplasmic" evidence="2">
    <location>
        <begin position="725"/>
        <end position="880"/>
    </location>
</feature>
<feature type="domain" description="Ig-like C2-type 1" evidence="2">
    <location>
        <begin position="45"/>
        <end position="142"/>
    </location>
</feature>
<feature type="domain" description="Ig-like C2-type 2" evidence="2">
    <location>
        <begin position="132"/>
        <end position="234"/>
    </location>
</feature>
<feature type="domain" description="Ig-like C2-type 3" evidence="2">
    <location>
        <begin position="252"/>
        <end position="340"/>
    </location>
</feature>
<feature type="domain" description="Ig-like C2-type 4" evidence="2">
    <location>
        <begin position="346"/>
        <end position="432"/>
    </location>
</feature>
<feature type="domain" description="Fibronectin type-III 1" evidence="4">
    <location>
        <begin position="461"/>
        <end position="567"/>
    </location>
</feature>
<feature type="domain" description="Fibronectin type-III 2" evidence="4">
    <location>
        <begin position="575"/>
        <end position="670"/>
    </location>
</feature>
<feature type="region of interest" description="Disordered" evidence="5">
    <location>
        <begin position="426"/>
        <end position="467"/>
    </location>
</feature>
<feature type="region of interest" description="Disordered" evidence="5">
    <location>
        <begin position="662"/>
        <end position="697"/>
    </location>
</feature>
<feature type="region of interest" description="Disordered" evidence="5">
    <location>
        <begin position="728"/>
        <end position="762"/>
    </location>
</feature>
<feature type="region of interest" description="Disordered" evidence="5">
    <location>
        <begin position="775"/>
        <end position="880"/>
    </location>
</feature>
<feature type="compositionally biased region" description="Polar residues" evidence="5">
    <location>
        <begin position="665"/>
        <end position="678"/>
    </location>
</feature>
<feature type="compositionally biased region" description="Polar residues" evidence="5">
    <location>
        <begin position="688"/>
        <end position="697"/>
    </location>
</feature>
<feature type="compositionally biased region" description="Low complexity" evidence="5">
    <location>
        <begin position="823"/>
        <end position="837"/>
    </location>
</feature>
<feature type="compositionally biased region" description="Low complexity" evidence="5">
    <location>
        <begin position="864"/>
        <end position="880"/>
    </location>
</feature>
<feature type="binding site" evidence="1">
    <location>
        <position position="497"/>
    </location>
    <ligand>
        <name>heparin</name>
        <dbReference type="ChEBI" id="CHEBI:28304"/>
    </ligand>
</feature>
<feature type="binding site" evidence="1">
    <location>
        <position position="501"/>
    </location>
    <ligand>
        <name>heparin</name>
        <dbReference type="ChEBI" id="CHEBI:28304"/>
    </ligand>
</feature>
<feature type="binding site" evidence="1">
    <location>
        <position position="503"/>
    </location>
    <ligand>
        <name>heparin</name>
        <dbReference type="ChEBI" id="CHEBI:28304"/>
    </ligand>
</feature>
<feature type="binding site" evidence="1">
    <location>
        <position position="541"/>
    </location>
    <ligand>
        <name>heparin</name>
        <dbReference type="ChEBI" id="CHEBI:28304"/>
    </ligand>
</feature>
<feature type="glycosylation site" description="N-linked (GlcNAc...) asparagine" evidence="2">
    <location>
        <position position="102"/>
    </location>
</feature>
<feature type="glycosylation site" description="N-linked (GlcNAc...) asparagine" evidence="2">
    <location>
        <position position="209"/>
    </location>
</feature>
<feature type="glycosylation site" description="N-linked (GlcNAc...) asparagine" evidence="2">
    <location>
        <position position="466"/>
    </location>
</feature>
<feature type="glycosylation site" description="N-linked (GlcNAc...) asparagine" evidence="2">
    <location>
        <position position="557"/>
    </location>
</feature>
<feature type="glycosylation site" description="N-linked (GlcNAc...) asparagine" evidence="2">
    <location>
        <position position="693"/>
    </location>
</feature>
<feature type="disulfide bond" evidence="3">
    <location>
        <begin position="68"/>
        <end position="126"/>
    </location>
</feature>
<feature type="disulfide bond" evidence="3">
    <location>
        <begin position="173"/>
        <end position="220"/>
    </location>
</feature>
<feature type="disulfide bond" evidence="3">
    <location>
        <begin position="276"/>
        <end position="324"/>
    </location>
</feature>
<feature type="disulfide bond" evidence="3">
    <location>
        <begin position="367"/>
        <end position="414"/>
    </location>
</feature>
<feature type="sequence variant" description="In strain: Tai18." evidence="6">
    <original>F</original>
    <variation>L</variation>
    <location>
        <position position="10"/>
    </location>
</feature>
<feature type="sequence variant" description="In strain: Tai18." evidence="6">
    <original>K</original>
    <variation>Q</variation>
    <location>
        <position position="175"/>
    </location>
</feature>
<feature type="sequence variant" description="In strain: Tai18." evidence="6">
    <original>L</original>
    <variation>M</variation>
    <location>
        <position position="806"/>
    </location>
</feature>
<feature type="sequence variant" description="In strain: Tai18." evidence="6">
    <original>L</original>
    <variation>V</variation>
    <location>
        <position position="863"/>
    </location>
</feature>
<reference evidence="10" key="1">
    <citation type="journal article" date="2007" name="Nature">
        <title>Evolution of genes and genomes on the Drosophila phylogeny.</title>
        <authorList>
            <consortium name="Drosophila 12 genomes consortium"/>
        </authorList>
    </citation>
    <scope>NUCLEOTIDE SEQUENCE [LARGE SCALE GENOMIC DNA]</scope>
    <source>
        <strain evidence="10">Tai18E2 / Tucson 14021-0261.01</strain>
    </source>
</reference>
<reference evidence="7 8" key="2">
    <citation type="journal article" date="2005" name="Mol. Biol. Evol.">
        <title>Intragenic Hill-Robertson interference influences selection intensity on synonymous mutations in Drosophila.</title>
        <authorList>
            <person name="Comeron J.M."/>
            <person name="Guthrie T.B."/>
        </authorList>
    </citation>
    <scope>NUCLEOTIDE SEQUENCE [GENOMIC DNA] OF 8-874</scope>
    <scope>VARIANTS LEU-10; GLN-175; MET-806 AND VAL-863</scope>
    <source>
        <strain evidence="9">T33</strain>
        <strain evidence="8">Tai18</strain>
    </source>
</reference>
<gene>
    <name evidence="1" type="primary">iHog</name>
    <name type="ORF">GE18390</name>
</gene>
<sequence length="880" mass="97160">MTLLTSSLLFFSLLTSRLEAIPVLEKSPAHPAHSAHPAHPSHPSPGVRILRAPESLVAPLGDEVVLECETSLQPERFEWSHRSSRSSGAGFKYLRTGTAKANVSQEAAISRLKVLVRQDTLGEYRCVGWFGPLVVTSTIARLELASTSLLGGQESESPLQWRVSAGNSVLWPCGKQVKSNPSASWSYYRNGVEIKPEFIGTNGNIFLSNVSSESSGSYSCQATNPASGERIQLTGSLQLQVTPEQRSQSKSPHLLNGQPNSQEITIREGSSLLLLCPGVGSPPPTVVWSSPDVVGAVKNKRSKVIGHALEISNTRVQDAGTYICFQDNGVRPVLEHYIKVHVEQPPQIVRPPWADLTNEGDRLKLECEATGVPTPEIYWLLNGHSSLDDTEAELSNNFLILHSVLKRHAGYVQCFARNRLGEHSAGTLLQVNPKQIQEPRESGGTHRPKPNQGSKQKQMYPPTPPNVTRLSDESVMLRWMVPRNDGLPIVIFKVQYRMVGKRKNWQTTNDNIPYGKPKWNSELGKSFTASVTDLKPQHTYRFRILAVYSNNDNKESNTSAKFYLQPGAALDPMPVPELLEIEEYSETAVVLHWSLASDADEHLITGYYAYYRPSSSAGEYFKATIEGAHARSFKIAPLETATMYEFKLQSFSAVSASEFSALKQGRTQRPKTSTTEEPTLQMGDRDTTTPSHNETFNMSPMLTGTIGGGAVLILLLISTCLCVCRRRSSRSRGNNPNKPRMAELRDDFVPLGNCSPTKQRQRTRHIHITLNPLAQQQQQALEEKNDTDQDAPYYQRPSSYDYDPGLRRMSSSSLRRSQRTLERAGGSNGSNNGNNNNLNQSAEAGPVENPGKPGRVLMKRPRLSSRSENLSSGSLNSVGV</sequence>
<organism>
    <name type="scientific">Drosophila yakuba</name>
    <name type="common">Fruit fly</name>
    <dbReference type="NCBI Taxonomy" id="7245"/>
    <lineage>
        <taxon>Eukaryota</taxon>
        <taxon>Metazoa</taxon>
        <taxon>Ecdysozoa</taxon>
        <taxon>Arthropoda</taxon>
        <taxon>Hexapoda</taxon>
        <taxon>Insecta</taxon>
        <taxon>Pterygota</taxon>
        <taxon>Neoptera</taxon>
        <taxon>Endopterygota</taxon>
        <taxon>Diptera</taxon>
        <taxon>Brachycera</taxon>
        <taxon>Muscomorpha</taxon>
        <taxon>Ephydroidea</taxon>
        <taxon>Drosophilidae</taxon>
        <taxon>Drosophila</taxon>
        <taxon>Sophophora</taxon>
    </lineage>
</organism>
<protein>
    <recommendedName>
        <fullName evidence="1">Interference hedgehog</fullName>
    </recommendedName>
</protein>
<accession>B4NZY8</accession>
<accession>Q2XY52</accession>
<accession>Q2XY53</accession>
<name>IHOG_DROYA</name>
<proteinExistence type="inferred from homology"/>
<comment type="function">
    <text evidence="1">Mediates response to the active Hedgehog (Hh) protein signal in embryos, functioning upstream or at the level of patched (ptc).</text>
</comment>
<comment type="subunit">
    <text evidence="1">Homodimer. Heterotetramer; 2 iHog chains bind 2 hh chains when facilitated by heparin, heparin is required to promote high-affinity interactions between hh and iHog (By similarity).</text>
</comment>
<comment type="subcellular location">
    <subcellularLocation>
        <location evidence="2">Membrane</location>
        <topology evidence="1 2">Single-pass type I membrane protein</topology>
    </subcellularLocation>
</comment>
<comment type="domain">
    <text evidence="1">The first fibronectin type-III domain mediates a specific interaction with Hh protein, in vitro. The second fibronectin type-III domain is additionally required for in vivo signaling activity (By similarity).</text>
</comment>
<comment type="similarity">
    <text evidence="2 7">Belongs to the immunoglobulin superfamily. IHOG family.</text>
</comment>
<evidence type="ECO:0000250" key="1">
    <source>
        <dbReference type="UniProtKB" id="Q9VM64"/>
    </source>
</evidence>
<evidence type="ECO:0000255" key="2"/>
<evidence type="ECO:0000255" key="3">
    <source>
        <dbReference type="PROSITE-ProRule" id="PRU00114"/>
    </source>
</evidence>
<evidence type="ECO:0000255" key="4">
    <source>
        <dbReference type="PROSITE-ProRule" id="PRU00316"/>
    </source>
</evidence>
<evidence type="ECO:0000256" key="5">
    <source>
        <dbReference type="SAM" id="MobiDB-lite"/>
    </source>
</evidence>
<evidence type="ECO:0000269" key="6">
    <source>
    </source>
</evidence>
<evidence type="ECO:0000305" key="7"/>
<evidence type="ECO:0000312" key="8">
    <source>
        <dbReference type="EMBL" id="ABA86415.1"/>
    </source>
</evidence>
<evidence type="ECO:0000312" key="9">
    <source>
        <dbReference type="EMBL" id="ABA86416.1"/>
    </source>
</evidence>
<evidence type="ECO:0000312" key="10">
    <source>
        <dbReference type="EMBL" id="EDW87815.1"/>
    </source>
</evidence>
<dbReference type="EMBL" id="CM000157">
    <property type="protein sequence ID" value="EDW87815.1"/>
    <property type="molecule type" value="Genomic_DNA"/>
</dbReference>
<dbReference type="EMBL" id="DQ138809">
    <property type="protein sequence ID" value="ABA86415.1"/>
    <property type="molecule type" value="Genomic_DNA"/>
</dbReference>
<dbReference type="EMBL" id="DQ138810">
    <property type="protein sequence ID" value="ABA86416.1"/>
    <property type="molecule type" value="Genomic_DNA"/>
</dbReference>
<dbReference type="SMR" id="B4NZY8"/>
<dbReference type="GlyCosmos" id="B4NZY8">
    <property type="glycosylation" value="5 sites, No reported glycans"/>
</dbReference>
<dbReference type="EnsemblMetazoa" id="FBtr0264908">
    <property type="protein sequence ID" value="FBpp0263400"/>
    <property type="gene ID" value="FBgn0084224"/>
</dbReference>
<dbReference type="EnsemblMetazoa" id="XM_002088067.4">
    <property type="protein sequence ID" value="XP_002088103.1"/>
    <property type="gene ID" value="LOC6527007"/>
</dbReference>
<dbReference type="GeneID" id="6527007"/>
<dbReference type="KEGG" id="dya:Dyak_GE18390"/>
<dbReference type="eggNOG" id="ENOG502QSGM">
    <property type="taxonomic scope" value="Eukaryota"/>
</dbReference>
<dbReference type="HOGENOM" id="CLU_004633_1_0_1"/>
<dbReference type="OMA" id="CGLMEGK"/>
<dbReference type="OrthoDB" id="9998697at2759"/>
<dbReference type="PhylomeDB" id="B4NZY8"/>
<dbReference type="Proteomes" id="UP000002282">
    <property type="component" value="Chromosome 2L"/>
</dbReference>
<dbReference type="GO" id="GO:0030424">
    <property type="term" value="C:axon"/>
    <property type="evidence" value="ECO:0007669"/>
    <property type="project" value="TreeGrafter"/>
</dbReference>
<dbReference type="GO" id="GO:0009986">
    <property type="term" value="C:cell surface"/>
    <property type="evidence" value="ECO:0007669"/>
    <property type="project" value="EnsemblMetazoa"/>
</dbReference>
<dbReference type="GO" id="GO:0035230">
    <property type="term" value="C:cytoneme"/>
    <property type="evidence" value="ECO:0007669"/>
    <property type="project" value="EnsemblMetazoa"/>
</dbReference>
<dbReference type="GO" id="GO:0016020">
    <property type="term" value="C:membrane"/>
    <property type="evidence" value="ECO:0000250"/>
    <property type="project" value="UniProtKB"/>
</dbReference>
<dbReference type="GO" id="GO:0005886">
    <property type="term" value="C:plasma membrane"/>
    <property type="evidence" value="ECO:0007669"/>
    <property type="project" value="EnsemblMetazoa"/>
</dbReference>
<dbReference type="GO" id="GO:0015026">
    <property type="term" value="F:coreceptor activity"/>
    <property type="evidence" value="ECO:0007669"/>
    <property type="project" value="EnsemblMetazoa"/>
</dbReference>
<dbReference type="GO" id="GO:0097108">
    <property type="term" value="F:hedgehog family protein binding"/>
    <property type="evidence" value="ECO:0007669"/>
    <property type="project" value="EnsemblMetazoa"/>
</dbReference>
<dbReference type="GO" id="GO:0008201">
    <property type="term" value="F:heparin binding"/>
    <property type="evidence" value="ECO:0000250"/>
    <property type="project" value="UniProtKB"/>
</dbReference>
<dbReference type="GO" id="GO:0005113">
    <property type="term" value="F:patched binding"/>
    <property type="evidence" value="ECO:0007669"/>
    <property type="project" value="EnsemblMetazoa"/>
</dbReference>
<dbReference type="GO" id="GO:0042803">
    <property type="term" value="F:protein homodimerization activity"/>
    <property type="evidence" value="ECO:0000250"/>
    <property type="project" value="UniProtKB"/>
</dbReference>
<dbReference type="GO" id="GO:0007411">
    <property type="term" value="P:axon guidance"/>
    <property type="evidence" value="ECO:0007669"/>
    <property type="project" value="TreeGrafter"/>
</dbReference>
<dbReference type="GO" id="GO:0048749">
    <property type="term" value="P:compound eye development"/>
    <property type="evidence" value="ECO:0007669"/>
    <property type="project" value="EnsemblMetazoa"/>
</dbReference>
<dbReference type="GO" id="GO:0035017">
    <property type="term" value="P:cuticle pattern formation"/>
    <property type="evidence" value="ECO:0007669"/>
    <property type="project" value="EnsemblMetazoa"/>
</dbReference>
<dbReference type="GO" id="GO:0034109">
    <property type="term" value="P:homotypic cell-cell adhesion"/>
    <property type="evidence" value="ECO:0007669"/>
    <property type="project" value="EnsemblMetazoa"/>
</dbReference>
<dbReference type="GO" id="GO:0071694">
    <property type="term" value="P:maintenance of protein location in extracellular region"/>
    <property type="evidence" value="ECO:0007669"/>
    <property type="project" value="EnsemblMetazoa"/>
</dbReference>
<dbReference type="GO" id="GO:0007379">
    <property type="term" value="P:segment specification"/>
    <property type="evidence" value="ECO:0007669"/>
    <property type="project" value="EnsemblMetazoa"/>
</dbReference>
<dbReference type="GO" id="GO:0007224">
    <property type="term" value="P:smoothened signaling pathway"/>
    <property type="evidence" value="ECO:0000250"/>
    <property type="project" value="UniProtKB"/>
</dbReference>
<dbReference type="GO" id="GO:0048100">
    <property type="term" value="P:wing disc anterior/posterior pattern formation"/>
    <property type="evidence" value="ECO:0007669"/>
    <property type="project" value="EnsemblMetazoa"/>
</dbReference>
<dbReference type="CDD" id="cd00063">
    <property type="entry name" value="FN3"/>
    <property type="match status" value="2"/>
</dbReference>
<dbReference type="FunFam" id="2.60.40.10:FF:001723">
    <property type="entry name" value="Interference hedgehog"/>
    <property type="match status" value="1"/>
</dbReference>
<dbReference type="FunFam" id="2.60.40.10:FF:001747">
    <property type="entry name" value="Interference hedgehog"/>
    <property type="match status" value="1"/>
</dbReference>
<dbReference type="FunFam" id="2.60.40.10:FF:001773">
    <property type="entry name" value="Interference hedgehog"/>
    <property type="match status" value="1"/>
</dbReference>
<dbReference type="FunFam" id="2.60.40.10:FF:002071">
    <property type="entry name" value="Interference hedgehog"/>
    <property type="match status" value="1"/>
</dbReference>
<dbReference type="FunFam" id="2.60.40.10:FF:002212">
    <property type="entry name" value="Interference hedgehog"/>
    <property type="match status" value="1"/>
</dbReference>
<dbReference type="Gene3D" id="2.60.40.10">
    <property type="entry name" value="Immunoglobulins"/>
    <property type="match status" value="5"/>
</dbReference>
<dbReference type="InterPro" id="IPR003961">
    <property type="entry name" value="FN3_dom"/>
</dbReference>
<dbReference type="InterPro" id="IPR036116">
    <property type="entry name" value="FN3_sf"/>
</dbReference>
<dbReference type="InterPro" id="IPR007110">
    <property type="entry name" value="Ig-like_dom"/>
</dbReference>
<dbReference type="InterPro" id="IPR036179">
    <property type="entry name" value="Ig-like_dom_sf"/>
</dbReference>
<dbReference type="InterPro" id="IPR013783">
    <property type="entry name" value="Ig-like_fold"/>
</dbReference>
<dbReference type="InterPro" id="IPR003599">
    <property type="entry name" value="Ig_sub"/>
</dbReference>
<dbReference type="InterPro" id="IPR003598">
    <property type="entry name" value="Ig_sub2"/>
</dbReference>
<dbReference type="PANTHER" id="PTHR44170:SF33">
    <property type="entry name" value="BROTHER OF IHOG, ISOFORM G-RELATED"/>
    <property type="match status" value="1"/>
</dbReference>
<dbReference type="PANTHER" id="PTHR44170">
    <property type="entry name" value="PROTEIN SIDEKICK"/>
    <property type="match status" value="1"/>
</dbReference>
<dbReference type="Pfam" id="PF00041">
    <property type="entry name" value="fn3"/>
    <property type="match status" value="2"/>
</dbReference>
<dbReference type="Pfam" id="PF13895">
    <property type="entry name" value="Ig_2"/>
    <property type="match status" value="1"/>
</dbReference>
<dbReference type="Pfam" id="PF13927">
    <property type="entry name" value="Ig_3"/>
    <property type="match status" value="2"/>
</dbReference>
<dbReference type="SMART" id="SM00060">
    <property type="entry name" value="FN3"/>
    <property type="match status" value="2"/>
</dbReference>
<dbReference type="SMART" id="SM00409">
    <property type="entry name" value="IG"/>
    <property type="match status" value="4"/>
</dbReference>
<dbReference type="SMART" id="SM00408">
    <property type="entry name" value="IGc2"/>
    <property type="match status" value="3"/>
</dbReference>
<dbReference type="SUPFAM" id="SSF49265">
    <property type="entry name" value="Fibronectin type III"/>
    <property type="match status" value="1"/>
</dbReference>
<dbReference type="SUPFAM" id="SSF48726">
    <property type="entry name" value="Immunoglobulin"/>
    <property type="match status" value="3"/>
</dbReference>
<dbReference type="PROSITE" id="PS50853">
    <property type="entry name" value="FN3"/>
    <property type="match status" value="2"/>
</dbReference>
<dbReference type="PROSITE" id="PS50835">
    <property type="entry name" value="IG_LIKE"/>
    <property type="match status" value="4"/>
</dbReference>
<keyword id="KW-1015">Disulfide bond</keyword>
<keyword id="KW-0325">Glycoprotein</keyword>
<keyword id="KW-0358">Heparin-binding</keyword>
<keyword id="KW-0393">Immunoglobulin domain</keyword>
<keyword id="KW-0472">Membrane</keyword>
<keyword id="KW-0654">Proteoglycan</keyword>
<keyword id="KW-0677">Repeat</keyword>
<keyword id="KW-0732">Signal</keyword>
<keyword id="KW-0812">Transmembrane</keyword>
<keyword id="KW-1133">Transmembrane helix</keyword>